<evidence type="ECO:0000250" key="1">
    <source>
        <dbReference type="UniProtKB" id="P22289"/>
    </source>
</evidence>
<evidence type="ECO:0000305" key="2"/>
<protein>
    <recommendedName>
        <fullName>Cytochrome b-c1 complex subunit 9</fullName>
    </recommendedName>
    <alternativeName>
        <fullName>Complex III subunit 9</fullName>
    </alternativeName>
</protein>
<dbReference type="EMBL" id="CR382126">
    <property type="protein sequence ID" value="CAG98475.2"/>
    <property type="status" value="ALT_INIT"/>
    <property type="molecule type" value="Genomic_DNA"/>
</dbReference>
<dbReference type="RefSeq" id="XP_455767.2">
    <property type="nucleotide sequence ID" value="XM_455767.2"/>
</dbReference>
<dbReference type="SMR" id="Q6CJX2"/>
<dbReference type="FunCoup" id="Q6CJX2">
    <property type="interactions" value="333"/>
</dbReference>
<dbReference type="STRING" id="284590.Q6CJX2"/>
<dbReference type="PaxDb" id="284590-Q6CJX2"/>
<dbReference type="KEGG" id="kla:KLLA0_F15325g"/>
<dbReference type="eggNOG" id="KOG3494">
    <property type="taxonomic scope" value="Eukaryota"/>
</dbReference>
<dbReference type="HOGENOM" id="CLU_171977_1_0_1"/>
<dbReference type="InParanoid" id="Q6CJX2"/>
<dbReference type="OMA" id="IKHKYEV"/>
<dbReference type="Proteomes" id="UP000000598">
    <property type="component" value="Chromosome F"/>
</dbReference>
<dbReference type="GO" id="GO:0005743">
    <property type="term" value="C:mitochondrial inner membrane"/>
    <property type="evidence" value="ECO:0007669"/>
    <property type="project" value="UniProtKB-SubCell"/>
</dbReference>
<dbReference type="GO" id="GO:0045275">
    <property type="term" value="C:respiratory chain complex III"/>
    <property type="evidence" value="ECO:0007669"/>
    <property type="project" value="InterPro"/>
</dbReference>
<dbReference type="GO" id="GO:0006122">
    <property type="term" value="P:mitochondrial electron transport, ubiquinol to cytochrome c"/>
    <property type="evidence" value="ECO:0007669"/>
    <property type="project" value="InterPro"/>
</dbReference>
<dbReference type="FunFam" id="1.20.5.260:FF:000001">
    <property type="entry name" value="Cytochrome b-c1 complex subunit 9"/>
    <property type="match status" value="1"/>
</dbReference>
<dbReference type="Gene3D" id="1.20.5.260">
    <property type="entry name" value="Cytochrome b-c1 complex subunit 9"/>
    <property type="match status" value="1"/>
</dbReference>
<dbReference type="InterPro" id="IPR008027">
    <property type="entry name" value="QCR9"/>
</dbReference>
<dbReference type="InterPro" id="IPR036656">
    <property type="entry name" value="QCR9_sf"/>
</dbReference>
<dbReference type="PANTHER" id="PTHR12980:SF0">
    <property type="entry name" value="CYTOCHROME B-C1 COMPLEX SUBUNIT 9"/>
    <property type="match status" value="1"/>
</dbReference>
<dbReference type="PANTHER" id="PTHR12980">
    <property type="entry name" value="UBIQUINOL-CYTOCHROME C REDUCTASE COMPLEX, SUBUNIT X"/>
    <property type="match status" value="1"/>
</dbReference>
<dbReference type="Pfam" id="PF05365">
    <property type="entry name" value="UCR_UQCRX_QCR9"/>
    <property type="match status" value="1"/>
</dbReference>
<dbReference type="SUPFAM" id="SSF81514">
    <property type="entry name" value="Subunit X (non-heme 7 kDa protein) of cytochrome bc1 complex (Ubiquinol-cytochrome c reductase)"/>
    <property type="match status" value="1"/>
</dbReference>
<feature type="chain" id="PRO_0000401064" description="Cytochrome b-c1 complex subunit 9">
    <location>
        <begin position="1"/>
        <end position="69"/>
    </location>
</feature>
<feature type="topological domain" description="Mitochondrial matrix" evidence="1">
    <location>
        <begin position="1"/>
        <end position="18"/>
    </location>
</feature>
<feature type="transmembrane region" description="Helical" evidence="1">
    <location>
        <begin position="19"/>
        <end position="44"/>
    </location>
</feature>
<feature type="topological domain" description="Mitochondrial intermembrane" evidence="1">
    <location>
        <begin position="45"/>
        <end position="69"/>
    </location>
</feature>
<gene>
    <name type="primary">QCR9</name>
    <name type="ordered locus">KLLA0F15325g</name>
</gene>
<name>QCR9_KLULA</name>
<comment type="function">
    <text evidence="1">Component of the ubiquinol-cytochrome c oxidoreductase, a multisubunit transmembrane complex that is part of the mitochondrial electron transport chain which drives oxidative phosphorylation. The respiratory chain contains 3 multisubunit complexes succinate dehydrogenase (complex II, CII), ubiquinol-cytochrome c oxidoreductase (cytochrome b-c1 complex, complex III, CIII) and cytochrome c oxidase (complex IV, CIV), that cooperate to transfer electrons derived from NADH and succinate to molecular oxygen, creating an electrochemical gradient over the inner membrane that drives transmembrane transport and the ATP synthase. The cytochrome b-c1 complex catalyzes electron transfer from ubiquinol to cytochrome c, linking this redox reaction to translocation of protons across the mitochondrial inner membrane, with protons being carried across the membrane as hydrogens on the quinol. In the process called Q cycle, 2 protons are consumed from the matrix, 4 protons are released into the intermembrane space and 2 electrons are passed to cytochrome c.</text>
</comment>
<comment type="subunit">
    <text evidence="1">Component of the ubiquinol-cytochrome c oxidoreductase (cytochrome b-c1 complex, complex III, CIII), a multisubunit enzyme composed of 3 respiratory subunits cytochrome b, cytochrome c1 and Rieske protein, 2 core protein subunits, and additional low-molecular weight protein subunits. The complex exists as an obligatory dimer and forms supercomplexes (SCs) in the inner mitochondrial membrane with cytochrome c oxidase (complex IV, CIV).</text>
</comment>
<comment type="subcellular location">
    <subcellularLocation>
        <location evidence="1">Mitochondrion inner membrane</location>
        <topology evidence="1">Single-pass membrane protein</topology>
    </subcellularLocation>
</comment>
<comment type="similarity">
    <text evidence="2">Belongs to the UQCR10/QCR9 family.</text>
</comment>
<comment type="sequence caution" evidence="2">
    <conflict type="erroneous initiation">
        <sequence resource="EMBL-CDS" id="CAG98475"/>
    </conflict>
    <text>Extended N-terminus.</text>
</comment>
<organism>
    <name type="scientific">Kluyveromyces lactis (strain ATCC 8585 / CBS 2359 / DSM 70799 / NBRC 1267 / NRRL Y-1140 / WM37)</name>
    <name type="common">Yeast</name>
    <name type="synonym">Candida sphaerica</name>
    <dbReference type="NCBI Taxonomy" id="284590"/>
    <lineage>
        <taxon>Eukaryota</taxon>
        <taxon>Fungi</taxon>
        <taxon>Dikarya</taxon>
        <taxon>Ascomycota</taxon>
        <taxon>Saccharomycotina</taxon>
        <taxon>Saccharomycetes</taxon>
        <taxon>Saccharomycetales</taxon>
        <taxon>Saccharomycetaceae</taxon>
        <taxon>Kluyveromyces</taxon>
    </lineage>
</organism>
<proteinExistence type="inferred from homology"/>
<accession>Q6CJX2</accession>
<keyword id="KW-0249">Electron transport</keyword>
<keyword id="KW-0472">Membrane</keyword>
<keyword id="KW-0496">Mitochondrion</keyword>
<keyword id="KW-0999">Mitochondrion inner membrane</keyword>
<keyword id="KW-1185">Reference proteome</keyword>
<keyword id="KW-0679">Respiratory chain</keyword>
<keyword id="KW-0812">Transmembrane</keyword>
<keyword id="KW-1133">Transmembrane helix</keyword>
<keyword id="KW-0813">Transport</keyword>
<sequence length="69" mass="7750">MSFASTLYKTVFKRNSVFVGTVFASAFVFQAAFDTGVTSWYENHNKGKLWKDIKGGIMNGGEEDEEDDE</sequence>
<reference key="1">
    <citation type="journal article" date="2004" name="Nature">
        <title>Genome evolution in yeasts.</title>
        <authorList>
            <person name="Dujon B."/>
            <person name="Sherman D."/>
            <person name="Fischer G."/>
            <person name="Durrens P."/>
            <person name="Casaregola S."/>
            <person name="Lafontaine I."/>
            <person name="de Montigny J."/>
            <person name="Marck C."/>
            <person name="Neuveglise C."/>
            <person name="Talla E."/>
            <person name="Goffard N."/>
            <person name="Frangeul L."/>
            <person name="Aigle M."/>
            <person name="Anthouard V."/>
            <person name="Babour A."/>
            <person name="Barbe V."/>
            <person name="Barnay S."/>
            <person name="Blanchin S."/>
            <person name="Beckerich J.-M."/>
            <person name="Beyne E."/>
            <person name="Bleykasten C."/>
            <person name="Boisrame A."/>
            <person name="Boyer J."/>
            <person name="Cattolico L."/>
            <person name="Confanioleri F."/>
            <person name="de Daruvar A."/>
            <person name="Despons L."/>
            <person name="Fabre E."/>
            <person name="Fairhead C."/>
            <person name="Ferry-Dumazet H."/>
            <person name="Groppi A."/>
            <person name="Hantraye F."/>
            <person name="Hennequin C."/>
            <person name="Jauniaux N."/>
            <person name="Joyet P."/>
            <person name="Kachouri R."/>
            <person name="Kerrest A."/>
            <person name="Koszul R."/>
            <person name="Lemaire M."/>
            <person name="Lesur I."/>
            <person name="Ma L."/>
            <person name="Muller H."/>
            <person name="Nicaud J.-M."/>
            <person name="Nikolski M."/>
            <person name="Oztas S."/>
            <person name="Ozier-Kalogeropoulos O."/>
            <person name="Pellenz S."/>
            <person name="Potier S."/>
            <person name="Richard G.-F."/>
            <person name="Straub M.-L."/>
            <person name="Suleau A."/>
            <person name="Swennen D."/>
            <person name="Tekaia F."/>
            <person name="Wesolowski-Louvel M."/>
            <person name="Westhof E."/>
            <person name="Wirth B."/>
            <person name="Zeniou-Meyer M."/>
            <person name="Zivanovic Y."/>
            <person name="Bolotin-Fukuhara M."/>
            <person name="Thierry A."/>
            <person name="Bouchier C."/>
            <person name="Caudron B."/>
            <person name="Scarpelli C."/>
            <person name="Gaillardin C."/>
            <person name="Weissenbach J."/>
            <person name="Wincker P."/>
            <person name="Souciet J.-L."/>
        </authorList>
    </citation>
    <scope>NUCLEOTIDE SEQUENCE [LARGE SCALE GENOMIC DNA]</scope>
    <source>
        <strain>ATCC 8585 / CBS 2359 / DSM 70799 / NBRC 1267 / NRRL Y-1140 / WM37</strain>
    </source>
</reference>